<comment type="function">
    <text evidence="1">An essential GTPase that binds both GDP and GTP, with rapid nucleotide exchange. Plays a role in 16S rRNA processing and 30S ribosomal subunit biogenesis and possibly also in cell cycle regulation and energy metabolism.</text>
</comment>
<comment type="subunit">
    <text evidence="1">Monomer.</text>
</comment>
<comment type="subcellular location">
    <subcellularLocation>
        <location>Cytoplasm</location>
    </subcellularLocation>
    <subcellularLocation>
        <location evidence="1">Cell inner membrane</location>
        <topology evidence="1">Peripheral membrane protein</topology>
    </subcellularLocation>
</comment>
<comment type="similarity">
    <text evidence="1 2">Belongs to the TRAFAC class TrmE-Era-EngA-EngB-Septin-like GTPase superfamily. Era GTPase family.</text>
</comment>
<organism>
    <name type="scientific">Neisseria meningitidis serogroup A / serotype 4A (strain DSM 15465 / Z2491)</name>
    <dbReference type="NCBI Taxonomy" id="122587"/>
    <lineage>
        <taxon>Bacteria</taxon>
        <taxon>Pseudomonadati</taxon>
        <taxon>Pseudomonadota</taxon>
        <taxon>Betaproteobacteria</taxon>
        <taxon>Neisseriales</taxon>
        <taxon>Neisseriaceae</taxon>
        <taxon>Neisseria</taxon>
    </lineage>
</organism>
<gene>
    <name evidence="1" type="primary">era</name>
    <name type="ordered locus">NMA0889</name>
</gene>
<protein>
    <recommendedName>
        <fullName evidence="1">GTPase Era</fullName>
    </recommendedName>
</protein>
<dbReference type="EMBL" id="AL157959">
    <property type="protein sequence ID" value="CAM08124.1"/>
    <property type="molecule type" value="Genomic_DNA"/>
</dbReference>
<dbReference type="PIR" id="D81935">
    <property type="entry name" value="D81935"/>
</dbReference>
<dbReference type="RefSeq" id="WP_002235591.1">
    <property type="nucleotide sequence ID" value="NC_003116.1"/>
</dbReference>
<dbReference type="SMR" id="Q9JVD2"/>
<dbReference type="EnsemblBacteria" id="CAM08124">
    <property type="protein sequence ID" value="CAM08124"/>
    <property type="gene ID" value="NMA0889"/>
</dbReference>
<dbReference type="GeneID" id="93386487"/>
<dbReference type="KEGG" id="nma:NMA0889"/>
<dbReference type="HOGENOM" id="CLU_038009_1_2_4"/>
<dbReference type="Proteomes" id="UP000000626">
    <property type="component" value="Chromosome"/>
</dbReference>
<dbReference type="GO" id="GO:0005829">
    <property type="term" value="C:cytosol"/>
    <property type="evidence" value="ECO:0007669"/>
    <property type="project" value="TreeGrafter"/>
</dbReference>
<dbReference type="GO" id="GO:0005886">
    <property type="term" value="C:plasma membrane"/>
    <property type="evidence" value="ECO:0007669"/>
    <property type="project" value="UniProtKB-SubCell"/>
</dbReference>
<dbReference type="GO" id="GO:0005525">
    <property type="term" value="F:GTP binding"/>
    <property type="evidence" value="ECO:0007669"/>
    <property type="project" value="UniProtKB-UniRule"/>
</dbReference>
<dbReference type="GO" id="GO:0003924">
    <property type="term" value="F:GTPase activity"/>
    <property type="evidence" value="ECO:0007669"/>
    <property type="project" value="UniProtKB-UniRule"/>
</dbReference>
<dbReference type="GO" id="GO:0043024">
    <property type="term" value="F:ribosomal small subunit binding"/>
    <property type="evidence" value="ECO:0007669"/>
    <property type="project" value="TreeGrafter"/>
</dbReference>
<dbReference type="GO" id="GO:0070181">
    <property type="term" value="F:small ribosomal subunit rRNA binding"/>
    <property type="evidence" value="ECO:0007669"/>
    <property type="project" value="UniProtKB-UniRule"/>
</dbReference>
<dbReference type="GO" id="GO:0000028">
    <property type="term" value="P:ribosomal small subunit assembly"/>
    <property type="evidence" value="ECO:0007669"/>
    <property type="project" value="TreeGrafter"/>
</dbReference>
<dbReference type="CDD" id="cd04163">
    <property type="entry name" value="Era"/>
    <property type="match status" value="1"/>
</dbReference>
<dbReference type="CDD" id="cd22534">
    <property type="entry name" value="KH-II_Era"/>
    <property type="match status" value="1"/>
</dbReference>
<dbReference type="FunFam" id="3.30.300.20:FF:000003">
    <property type="entry name" value="GTPase Era"/>
    <property type="match status" value="1"/>
</dbReference>
<dbReference type="FunFam" id="3.40.50.300:FF:000094">
    <property type="entry name" value="GTPase Era"/>
    <property type="match status" value="1"/>
</dbReference>
<dbReference type="Gene3D" id="3.30.300.20">
    <property type="match status" value="1"/>
</dbReference>
<dbReference type="Gene3D" id="3.40.50.300">
    <property type="entry name" value="P-loop containing nucleotide triphosphate hydrolases"/>
    <property type="match status" value="1"/>
</dbReference>
<dbReference type="HAMAP" id="MF_00367">
    <property type="entry name" value="GTPase_Era"/>
    <property type="match status" value="1"/>
</dbReference>
<dbReference type="InterPro" id="IPR030388">
    <property type="entry name" value="G_ERA_dom"/>
</dbReference>
<dbReference type="InterPro" id="IPR006073">
    <property type="entry name" value="GTP-bd"/>
</dbReference>
<dbReference type="InterPro" id="IPR005662">
    <property type="entry name" value="GTPase_Era-like"/>
</dbReference>
<dbReference type="InterPro" id="IPR015946">
    <property type="entry name" value="KH_dom-like_a/b"/>
</dbReference>
<dbReference type="InterPro" id="IPR004044">
    <property type="entry name" value="KH_dom_type_2"/>
</dbReference>
<dbReference type="InterPro" id="IPR009019">
    <property type="entry name" value="KH_sf_prok-type"/>
</dbReference>
<dbReference type="InterPro" id="IPR027417">
    <property type="entry name" value="P-loop_NTPase"/>
</dbReference>
<dbReference type="InterPro" id="IPR005225">
    <property type="entry name" value="Small_GTP-bd"/>
</dbReference>
<dbReference type="NCBIfam" id="TIGR00436">
    <property type="entry name" value="era"/>
    <property type="match status" value="1"/>
</dbReference>
<dbReference type="NCBIfam" id="NF000908">
    <property type="entry name" value="PRK00089.1"/>
    <property type="match status" value="1"/>
</dbReference>
<dbReference type="NCBIfam" id="TIGR00231">
    <property type="entry name" value="small_GTP"/>
    <property type="match status" value="1"/>
</dbReference>
<dbReference type="PANTHER" id="PTHR42698">
    <property type="entry name" value="GTPASE ERA"/>
    <property type="match status" value="1"/>
</dbReference>
<dbReference type="PANTHER" id="PTHR42698:SF1">
    <property type="entry name" value="GTPASE ERA, MITOCHONDRIAL"/>
    <property type="match status" value="1"/>
</dbReference>
<dbReference type="Pfam" id="PF07650">
    <property type="entry name" value="KH_2"/>
    <property type="match status" value="1"/>
</dbReference>
<dbReference type="Pfam" id="PF01926">
    <property type="entry name" value="MMR_HSR1"/>
    <property type="match status" value="1"/>
</dbReference>
<dbReference type="PRINTS" id="PR00326">
    <property type="entry name" value="GTP1OBG"/>
</dbReference>
<dbReference type="SUPFAM" id="SSF52540">
    <property type="entry name" value="P-loop containing nucleoside triphosphate hydrolases"/>
    <property type="match status" value="1"/>
</dbReference>
<dbReference type="SUPFAM" id="SSF54814">
    <property type="entry name" value="Prokaryotic type KH domain (KH-domain type II)"/>
    <property type="match status" value="1"/>
</dbReference>
<dbReference type="PROSITE" id="PS51713">
    <property type="entry name" value="G_ERA"/>
    <property type="match status" value="1"/>
</dbReference>
<dbReference type="PROSITE" id="PS50823">
    <property type="entry name" value="KH_TYPE_2"/>
    <property type="match status" value="1"/>
</dbReference>
<keyword id="KW-0997">Cell inner membrane</keyword>
<keyword id="KW-1003">Cell membrane</keyword>
<keyword id="KW-0963">Cytoplasm</keyword>
<keyword id="KW-0342">GTP-binding</keyword>
<keyword id="KW-0472">Membrane</keyword>
<keyword id="KW-0547">Nucleotide-binding</keyword>
<keyword id="KW-0690">Ribosome biogenesis</keyword>
<keyword id="KW-0694">RNA-binding</keyword>
<keyword id="KW-0699">rRNA-binding</keyword>
<evidence type="ECO:0000255" key="1">
    <source>
        <dbReference type="HAMAP-Rule" id="MF_00367"/>
    </source>
</evidence>
<evidence type="ECO:0000255" key="2">
    <source>
        <dbReference type="PROSITE-ProRule" id="PRU01050"/>
    </source>
</evidence>
<proteinExistence type="inferred from homology"/>
<accession>Q9JVD2</accession>
<accession>A1IQU0</accession>
<name>ERA_NEIMA</name>
<feature type="chain" id="PRO_0000180033" description="GTPase Era">
    <location>
        <begin position="1"/>
        <end position="307"/>
    </location>
</feature>
<feature type="domain" description="Era-type G" evidence="2">
    <location>
        <begin position="17"/>
        <end position="186"/>
    </location>
</feature>
<feature type="domain" description="KH type-2" evidence="1">
    <location>
        <begin position="217"/>
        <end position="293"/>
    </location>
</feature>
<feature type="region of interest" description="G1" evidence="2">
    <location>
        <begin position="25"/>
        <end position="32"/>
    </location>
</feature>
<feature type="region of interest" description="G2" evidence="2">
    <location>
        <begin position="51"/>
        <end position="55"/>
    </location>
</feature>
<feature type="region of interest" description="G3" evidence="2">
    <location>
        <begin position="72"/>
        <end position="75"/>
    </location>
</feature>
<feature type="region of interest" description="G4" evidence="2">
    <location>
        <begin position="133"/>
        <end position="136"/>
    </location>
</feature>
<feature type="region of interest" description="G5" evidence="2">
    <location>
        <begin position="165"/>
        <end position="167"/>
    </location>
</feature>
<feature type="binding site" evidence="1">
    <location>
        <begin position="25"/>
        <end position="32"/>
    </location>
    <ligand>
        <name>GTP</name>
        <dbReference type="ChEBI" id="CHEBI:37565"/>
    </ligand>
</feature>
<feature type="binding site" evidence="1">
    <location>
        <begin position="72"/>
        <end position="76"/>
    </location>
    <ligand>
        <name>GTP</name>
        <dbReference type="ChEBI" id="CHEBI:37565"/>
    </ligand>
</feature>
<feature type="binding site" evidence="1">
    <location>
        <begin position="133"/>
        <end position="136"/>
    </location>
    <ligand>
        <name>GTP</name>
        <dbReference type="ChEBI" id="CHEBI:37565"/>
    </ligand>
</feature>
<sequence>MDIETFLAGERAADGYRCGFVAIVGRPNVGKSTLMNHLIGQKISITSKKAQTTRNRVTGIYTDDTAQFVFVDTPGFQTDHRNALNDRLNQNVTEALGGVDVVVFVVEAMRFTDADRVVLKQLPKHTPVILVVNKIDKDKAKDRYALEAFVAQVRAEFEFAAAEAVSAKHGLRIANLLELIKPYLPESVPMYPEDMVTDKSARFLAMEIVREKLFRYLGEELPYAMNVEVEQFEEEDGLNRIYIAVLVDKESQKAILIGKGGERLKKISTEARLDMEKLFDTKVFLKVWVKVKSGWADDIRFLRELGL</sequence>
<reference key="1">
    <citation type="journal article" date="2000" name="Nature">
        <title>Complete DNA sequence of a serogroup A strain of Neisseria meningitidis Z2491.</title>
        <authorList>
            <person name="Parkhill J."/>
            <person name="Achtman M."/>
            <person name="James K.D."/>
            <person name="Bentley S.D."/>
            <person name="Churcher C.M."/>
            <person name="Klee S.R."/>
            <person name="Morelli G."/>
            <person name="Basham D."/>
            <person name="Brown D."/>
            <person name="Chillingworth T."/>
            <person name="Davies R.M."/>
            <person name="Davis P."/>
            <person name="Devlin K."/>
            <person name="Feltwell T."/>
            <person name="Hamlin N."/>
            <person name="Holroyd S."/>
            <person name="Jagels K."/>
            <person name="Leather S."/>
            <person name="Moule S."/>
            <person name="Mungall K.L."/>
            <person name="Quail M.A."/>
            <person name="Rajandream M.A."/>
            <person name="Rutherford K.M."/>
            <person name="Simmonds M."/>
            <person name="Skelton J."/>
            <person name="Whitehead S."/>
            <person name="Spratt B.G."/>
            <person name="Barrell B.G."/>
        </authorList>
    </citation>
    <scope>NUCLEOTIDE SEQUENCE [LARGE SCALE GENOMIC DNA]</scope>
    <source>
        <strain>DSM 15465 / Z2491</strain>
    </source>
</reference>